<reference evidence="8" key="1">
    <citation type="journal article" date="2011" name="Peptides">
        <title>Neuropeptides associated with the central nervous system of the cabbage root fly, Delia radicum (L).</title>
        <authorList>
            <person name="Audsley N."/>
            <person name="Matthews H.J."/>
            <person name="Down R.E."/>
            <person name="Weaver R.J."/>
        </authorList>
    </citation>
    <scope>PROTEIN SEQUENCE</scope>
    <scope>TISSUE SPECIFICITY</scope>
    <scope>MASS SPECTROMETRY</scope>
    <scope>AMIDATION AT PHE-7</scope>
    <source>
        <tissue evidence="4">Abdominal ganglion</tissue>
        <tissue evidence="4">Brain</tissue>
        <tissue evidence="4">Corpora allata</tissue>
        <tissue evidence="4">Corpora cardiaca</tissue>
    </source>
</reference>
<reference evidence="8" key="2">
    <citation type="journal article" date="2012" name="PLoS ONE">
        <title>Peptidomics of the agriculturally damaging larval stage of the cabbage root fly Delia radicum (Diptera: Anthomyiidae).</title>
        <authorList>
            <person name="Zoephel J."/>
            <person name="Reiher W."/>
            <person name="Rexer K.-H."/>
            <person name="Kahnt J."/>
            <person name="Wegener C."/>
        </authorList>
    </citation>
    <scope>PROTEIN SEQUENCE</scope>
    <scope>TISSUE SPECIFICITY</scope>
    <scope>DEVELOPMENTAL STAGE</scope>
    <scope>MASS SPECTROMETRY</scope>
    <scope>AMIDATION AT PHE-7</scope>
    <source>
        <tissue evidence="5">CNS</tissue>
    </source>
</reference>
<comment type="function">
    <text evidence="1">FMRFamides and FMRFamide-like peptides are neuropeptides.</text>
</comment>
<comment type="subcellular location">
    <subcellularLocation>
        <location evidence="2">Secreted</location>
    </subcellularLocation>
</comment>
<comment type="tissue specificity">
    <text evidence="4 5">In larvae, expressed in the CNS and thoracic perisymapthetic organs (tPSO) but not in the ring gland or abdominal perisymapthetic organs (aPSO) (at protein level). In adults, expressed in brain and thoracic-abdominal ganglion but not in corpora cardiaca and corpora allata (at protein level).</text>
</comment>
<comment type="developmental stage">
    <text evidence="4 5">Detected in larvae and adults.</text>
</comment>
<comment type="mass spectrometry"/>
<comment type="mass spectrometry"/>
<comment type="similarity">
    <text evidence="3">Belongs to the FARP (FMRFamide related peptide) family.</text>
</comment>
<organism>
    <name type="scientific">Delia radicum</name>
    <name type="common">Cabbage root fly</name>
    <name type="synonym">Anthomyia brassicae</name>
    <dbReference type="NCBI Taxonomy" id="30064"/>
    <lineage>
        <taxon>Eukaryota</taxon>
        <taxon>Metazoa</taxon>
        <taxon>Ecdysozoa</taxon>
        <taxon>Arthropoda</taxon>
        <taxon>Hexapoda</taxon>
        <taxon>Insecta</taxon>
        <taxon>Pterygota</taxon>
        <taxon>Neoptera</taxon>
        <taxon>Endopterygota</taxon>
        <taxon>Diptera</taxon>
        <taxon>Brachycera</taxon>
        <taxon>Muscomorpha</taxon>
        <taxon>Muscoidea</taxon>
        <taxon>Anthomyiidae</taxon>
        <taxon>Anthomyiinae</taxon>
        <taxon>Delia</taxon>
    </lineage>
</organism>
<accession>B3EWJ9</accession>
<feature type="peptide" id="PRO_0000419703" description="FMRFamide-like neuropeptide PDNFMRF-amide" evidence="4 5">
    <location>
        <begin position="1"/>
        <end position="7"/>
    </location>
</feature>
<feature type="modified residue" description="Phenylalanine amide" evidence="4 5">
    <location>
        <position position="7"/>
    </location>
</feature>
<name>FAR3_DELRA</name>
<keyword id="KW-0027">Amidation</keyword>
<keyword id="KW-0903">Direct protein sequencing</keyword>
<keyword id="KW-0527">Neuropeptide</keyword>
<keyword id="KW-0964">Secreted</keyword>
<proteinExistence type="evidence at protein level"/>
<dbReference type="GO" id="GO:0005576">
    <property type="term" value="C:extracellular region"/>
    <property type="evidence" value="ECO:0007669"/>
    <property type="project" value="UniProtKB-SubCell"/>
</dbReference>
<dbReference type="GO" id="GO:0007218">
    <property type="term" value="P:neuropeptide signaling pathway"/>
    <property type="evidence" value="ECO:0007669"/>
    <property type="project" value="UniProtKB-KW"/>
</dbReference>
<evidence type="ECO:0000250" key="1">
    <source>
        <dbReference type="UniProtKB" id="P41855"/>
    </source>
</evidence>
<evidence type="ECO:0000250" key="2">
    <source>
        <dbReference type="UniProtKB" id="P41866"/>
    </source>
</evidence>
<evidence type="ECO:0000255" key="3"/>
<evidence type="ECO:0000269" key="4">
    <source>
    </source>
</evidence>
<evidence type="ECO:0000269" key="5">
    <source>
    </source>
</evidence>
<evidence type="ECO:0000303" key="6">
    <source>
    </source>
</evidence>
<evidence type="ECO:0000303" key="7">
    <source>
    </source>
</evidence>
<evidence type="ECO:0000305" key="8"/>
<sequence>PDNFMRF</sequence>
<protein>
    <recommendedName>
        <fullName evidence="6 7">FMRFamide-like neuropeptide PDNFMRF-amide</fullName>
    </recommendedName>
</protein>